<protein>
    <recommendedName>
        <fullName>Serine protease SplC</fullName>
        <ecNumber>3.4.21.-</ecNumber>
    </recommendedName>
</protein>
<reference key="1">
    <citation type="journal article" date="2001" name="Lancet">
        <title>Whole genome sequencing of meticillin-resistant Staphylococcus aureus.</title>
        <authorList>
            <person name="Kuroda M."/>
            <person name="Ohta T."/>
            <person name="Uchiyama I."/>
            <person name="Baba T."/>
            <person name="Yuzawa H."/>
            <person name="Kobayashi I."/>
            <person name="Cui L."/>
            <person name="Oguchi A."/>
            <person name="Aoki K."/>
            <person name="Nagai Y."/>
            <person name="Lian J.-Q."/>
            <person name="Ito T."/>
            <person name="Kanamori M."/>
            <person name="Matsumaru H."/>
            <person name="Maruyama A."/>
            <person name="Murakami H."/>
            <person name="Hosoyama A."/>
            <person name="Mizutani-Ui Y."/>
            <person name="Takahashi N.K."/>
            <person name="Sawano T."/>
            <person name="Inoue R."/>
            <person name="Kaito C."/>
            <person name="Sekimizu K."/>
            <person name="Hirakawa H."/>
            <person name="Kuhara S."/>
            <person name="Goto S."/>
            <person name="Yabuzaki J."/>
            <person name="Kanehisa M."/>
            <person name="Yamashita A."/>
            <person name="Oshima K."/>
            <person name="Furuya K."/>
            <person name="Yoshino C."/>
            <person name="Shiba T."/>
            <person name="Hattori M."/>
            <person name="Ogasawara N."/>
            <person name="Hayashi H."/>
            <person name="Hiramatsu K."/>
        </authorList>
    </citation>
    <scope>NUCLEOTIDE SEQUENCE [LARGE SCALE GENOMIC DNA]</scope>
    <source>
        <strain>Mu50 / ATCC 700699</strain>
    </source>
</reference>
<accession>Q7A2Q8</accession>
<name>SPLC_STAAM</name>
<sequence length="239" mass="26099">MNKNIVIKSMAALAILTSVTGINAAVVEETQQIANAEKNVTQVKDTNNFPYNGVVSFKDATGFVIGKNTIITNKHVSKDYKVGDRITAHPNGDKGNGGIYKIKSISDYPGDEDISVMNIEEQAVERGPKGFNFNENVQAFNFAKDAKVDDKIKVIGYPLPAQNSFKQFESTGTIKRIKDNILNFDAYIEPGNSGSPVLNSNNEVIGVVYGGIGKIGSEYNGAVYFTPQIKDFIQKHIEQ</sequence>
<gene>
    <name type="primary">splC</name>
    <name type="ordered locus">SAV1811</name>
</gene>
<keyword id="KW-0378">Hydrolase</keyword>
<keyword id="KW-0645">Protease</keyword>
<keyword id="KW-0964">Secreted</keyword>
<keyword id="KW-0720">Serine protease</keyword>
<keyword id="KW-0732">Signal</keyword>
<proteinExistence type="inferred from homology"/>
<comment type="subcellular location">
    <subcellularLocation>
        <location evidence="1">Secreted</location>
    </subcellularLocation>
</comment>
<comment type="similarity">
    <text evidence="2">Belongs to the peptidase S1B family.</text>
</comment>
<evidence type="ECO:0000250" key="1"/>
<evidence type="ECO:0000305" key="2"/>
<dbReference type="EC" id="3.4.21.-"/>
<dbReference type="EMBL" id="BA000017">
    <property type="protein sequence ID" value="BAB57973.1"/>
    <property type="molecule type" value="Genomic_DNA"/>
</dbReference>
<dbReference type="RefSeq" id="WP_001038872.1">
    <property type="nucleotide sequence ID" value="NC_002758.2"/>
</dbReference>
<dbReference type="SMR" id="Q7A2Q8"/>
<dbReference type="MEROPS" id="S01.283"/>
<dbReference type="DNASU" id="1121785"/>
<dbReference type="KEGG" id="sav:SAV1811"/>
<dbReference type="HOGENOM" id="CLU_073589_2_0_9"/>
<dbReference type="PhylomeDB" id="Q7A2Q8"/>
<dbReference type="Proteomes" id="UP000002481">
    <property type="component" value="Chromosome"/>
</dbReference>
<dbReference type="GO" id="GO:0005576">
    <property type="term" value="C:extracellular region"/>
    <property type="evidence" value="ECO:0007669"/>
    <property type="project" value="UniProtKB-SubCell"/>
</dbReference>
<dbReference type="GO" id="GO:0004252">
    <property type="term" value="F:serine-type endopeptidase activity"/>
    <property type="evidence" value="ECO:0007669"/>
    <property type="project" value="InterPro"/>
</dbReference>
<dbReference type="GO" id="GO:0006508">
    <property type="term" value="P:proteolysis"/>
    <property type="evidence" value="ECO:0007669"/>
    <property type="project" value="UniProtKB-KW"/>
</dbReference>
<dbReference type="Gene3D" id="2.40.10.10">
    <property type="entry name" value="Trypsin-like serine proteases"/>
    <property type="match status" value="2"/>
</dbReference>
<dbReference type="InterPro" id="IPR009003">
    <property type="entry name" value="Peptidase_S1_PA"/>
</dbReference>
<dbReference type="InterPro" id="IPR043504">
    <property type="entry name" value="Peptidase_S1_PA_chymotrypsin"/>
</dbReference>
<dbReference type="InterPro" id="IPR008256">
    <property type="entry name" value="Peptidase_S1B"/>
</dbReference>
<dbReference type="InterPro" id="IPR008353">
    <property type="entry name" value="Peptidase_S1B_tx"/>
</dbReference>
<dbReference type="InterPro" id="IPR001254">
    <property type="entry name" value="Trypsin_dom"/>
</dbReference>
<dbReference type="InterPro" id="IPR028301">
    <property type="entry name" value="V8_his_AS"/>
</dbReference>
<dbReference type="PANTHER" id="PTHR43019:SF23">
    <property type="entry name" value="PROTEASE DO-LIKE 5, CHLOROPLASTIC"/>
    <property type="match status" value="1"/>
</dbReference>
<dbReference type="PANTHER" id="PTHR43019">
    <property type="entry name" value="SERINE ENDOPROTEASE DEGS"/>
    <property type="match status" value="1"/>
</dbReference>
<dbReference type="Pfam" id="PF00089">
    <property type="entry name" value="Trypsin"/>
    <property type="match status" value="1"/>
</dbReference>
<dbReference type="PRINTS" id="PR01774">
    <property type="entry name" value="EXFOLTOXIN"/>
</dbReference>
<dbReference type="PRINTS" id="PR00839">
    <property type="entry name" value="V8PROTEASE"/>
</dbReference>
<dbReference type="SUPFAM" id="SSF50494">
    <property type="entry name" value="Trypsin-like serine proteases"/>
    <property type="match status" value="1"/>
</dbReference>
<dbReference type="PROSITE" id="PS00672">
    <property type="entry name" value="V8_HIS"/>
    <property type="match status" value="1"/>
</dbReference>
<feature type="signal peptide" evidence="1">
    <location>
        <begin position="1"/>
        <end position="36"/>
    </location>
</feature>
<feature type="chain" id="PRO_0000359557" description="Serine protease SplC">
    <location>
        <begin position="37"/>
        <end position="239"/>
    </location>
</feature>
<feature type="active site" description="Charge relay system" evidence="1">
    <location>
        <position position="75"/>
    </location>
</feature>
<feature type="active site" description="Charge relay system" evidence="1">
    <location>
        <position position="113"/>
    </location>
</feature>
<feature type="active site" description="Charge relay system" evidence="1">
    <location>
        <position position="193"/>
    </location>
</feature>
<organism>
    <name type="scientific">Staphylococcus aureus (strain Mu50 / ATCC 700699)</name>
    <dbReference type="NCBI Taxonomy" id="158878"/>
    <lineage>
        <taxon>Bacteria</taxon>
        <taxon>Bacillati</taxon>
        <taxon>Bacillota</taxon>
        <taxon>Bacilli</taxon>
        <taxon>Bacillales</taxon>
        <taxon>Staphylococcaceae</taxon>
        <taxon>Staphylococcus</taxon>
    </lineage>
</organism>